<protein>
    <recommendedName>
        <fullName>Uncharacterized HTH-type transcriptional regulator YxaF</fullName>
    </recommendedName>
</protein>
<name>YXAF_BACSU</name>
<organism>
    <name type="scientific">Bacillus subtilis (strain 168)</name>
    <dbReference type="NCBI Taxonomy" id="224308"/>
    <lineage>
        <taxon>Bacteria</taxon>
        <taxon>Bacillati</taxon>
        <taxon>Bacillota</taxon>
        <taxon>Bacilli</taxon>
        <taxon>Bacillales</taxon>
        <taxon>Bacillaceae</taxon>
        <taxon>Bacillus</taxon>
    </lineage>
</organism>
<keyword id="KW-0002">3D-structure</keyword>
<keyword id="KW-0238">DNA-binding</keyword>
<keyword id="KW-1185">Reference proteome</keyword>
<keyword id="KW-0678">Repressor</keyword>
<keyword id="KW-0804">Transcription</keyword>
<keyword id="KW-0805">Transcription regulation</keyword>
<gene>
    <name type="primary">yxaF</name>
    <name type="ordered locus">BSU39990</name>
    <name type="ORF">S14F</name>
</gene>
<reference key="1">
    <citation type="journal article" date="1995" name="DNA Res.">
        <title>Cloning and sequencing of a 36-kb region of the Bacillus subtilis genome between the gnt and iol operons.</title>
        <authorList>
            <person name="Yoshida K."/>
            <person name="Seki S."/>
            <person name="Fujimura M."/>
            <person name="Miwa Y."/>
            <person name="Fujita Y."/>
        </authorList>
    </citation>
    <scope>NUCLEOTIDE SEQUENCE [GENOMIC DNA]</scope>
    <source>
        <strain>168 / BGSC1A1</strain>
    </source>
</reference>
<reference key="2">
    <citation type="journal article" date="1997" name="Nature">
        <title>The complete genome sequence of the Gram-positive bacterium Bacillus subtilis.</title>
        <authorList>
            <person name="Kunst F."/>
            <person name="Ogasawara N."/>
            <person name="Moszer I."/>
            <person name="Albertini A.M."/>
            <person name="Alloni G."/>
            <person name="Azevedo V."/>
            <person name="Bertero M.G."/>
            <person name="Bessieres P."/>
            <person name="Bolotin A."/>
            <person name="Borchert S."/>
            <person name="Borriss R."/>
            <person name="Boursier L."/>
            <person name="Brans A."/>
            <person name="Braun M."/>
            <person name="Brignell S.C."/>
            <person name="Bron S."/>
            <person name="Brouillet S."/>
            <person name="Bruschi C.V."/>
            <person name="Caldwell B."/>
            <person name="Capuano V."/>
            <person name="Carter N.M."/>
            <person name="Choi S.-K."/>
            <person name="Codani J.-J."/>
            <person name="Connerton I.F."/>
            <person name="Cummings N.J."/>
            <person name="Daniel R.A."/>
            <person name="Denizot F."/>
            <person name="Devine K.M."/>
            <person name="Duesterhoeft A."/>
            <person name="Ehrlich S.D."/>
            <person name="Emmerson P.T."/>
            <person name="Entian K.-D."/>
            <person name="Errington J."/>
            <person name="Fabret C."/>
            <person name="Ferrari E."/>
            <person name="Foulger D."/>
            <person name="Fritz C."/>
            <person name="Fujita M."/>
            <person name="Fujita Y."/>
            <person name="Fuma S."/>
            <person name="Galizzi A."/>
            <person name="Galleron N."/>
            <person name="Ghim S.-Y."/>
            <person name="Glaser P."/>
            <person name="Goffeau A."/>
            <person name="Golightly E.J."/>
            <person name="Grandi G."/>
            <person name="Guiseppi G."/>
            <person name="Guy B.J."/>
            <person name="Haga K."/>
            <person name="Haiech J."/>
            <person name="Harwood C.R."/>
            <person name="Henaut A."/>
            <person name="Hilbert H."/>
            <person name="Holsappel S."/>
            <person name="Hosono S."/>
            <person name="Hullo M.-F."/>
            <person name="Itaya M."/>
            <person name="Jones L.-M."/>
            <person name="Joris B."/>
            <person name="Karamata D."/>
            <person name="Kasahara Y."/>
            <person name="Klaerr-Blanchard M."/>
            <person name="Klein C."/>
            <person name="Kobayashi Y."/>
            <person name="Koetter P."/>
            <person name="Koningstein G."/>
            <person name="Krogh S."/>
            <person name="Kumano M."/>
            <person name="Kurita K."/>
            <person name="Lapidus A."/>
            <person name="Lardinois S."/>
            <person name="Lauber J."/>
            <person name="Lazarevic V."/>
            <person name="Lee S.-M."/>
            <person name="Levine A."/>
            <person name="Liu H."/>
            <person name="Masuda S."/>
            <person name="Mauel C."/>
            <person name="Medigue C."/>
            <person name="Medina N."/>
            <person name="Mellado R.P."/>
            <person name="Mizuno M."/>
            <person name="Moestl D."/>
            <person name="Nakai S."/>
            <person name="Noback M."/>
            <person name="Noone D."/>
            <person name="O'Reilly M."/>
            <person name="Ogawa K."/>
            <person name="Ogiwara A."/>
            <person name="Oudega B."/>
            <person name="Park S.-H."/>
            <person name="Parro V."/>
            <person name="Pohl T.M."/>
            <person name="Portetelle D."/>
            <person name="Porwollik S."/>
            <person name="Prescott A.M."/>
            <person name="Presecan E."/>
            <person name="Pujic P."/>
            <person name="Purnelle B."/>
            <person name="Rapoport G."/>
            <person name="Rey M."/>
            <person name="Reynolds S."/>
            <person name="Rieger M."/>
            <person name="Rivolta C."/>
            <person name="Rocha E."/>
            <person name="Roche B."/>
            <person name="Rose M."/>
            <person name="Sadaie Y."/>
            <person name="Sato T."/>
            <person name="Scanlan E."/>
            <person name="Schleich S."/>
            <person name="Schroeter R."/>
            <person name="Scoffone F."/>
            <person name="Sekiguchi J."/>
            <person name="Sekowska A."/>
            <person name="Seror S.J."/>
            <person name="Serror P."/>
            <person name="Shin B.-S."/>
            <person name="Soldo B."/>
            <person name="Sorokin A."/>
            <person name="Tacconi E."/>
            <person name="Takagi T."/>
            <person name="Takahashi H."/>
            <person name="Takemaru K."/>
            <person name="Takeuchi M."/>
            <person name="Tamakoshi A."/>
            <person name="Tanaka T."/>
            <person name="Terpstra P."/>
            <person name="Tognoni A."/>
            <person name="Tosato V."/>
            <person name="Uchiyama S."/>
            <person name="Vandenbol M."/>
            <person name="Vannier F."/>
            <person name="Vassarotti A."/>
            <person name="Viari A."/>
            <person name="Wambutt R."/>
            <person name="Wedler E."/>
            <person name="Wedler H."/>
            <person name="Weitzenegger T."/>
            <person name="Winters P."/>
            <person name="Wipat A."/>
            <person name="Yamamoto H."/>
            <person name="Yamane K."/>
            <person name="Yasumoto K."/>
            <person name="Yata K."/>
            <person name="Yoshida K."/>
            <person name="Yoshikawa H.-F."/>
            <person name="Zumstein E."/>
            <person name="Yoshikawa H."/>
            <person name="Danchin A."/>
        </authorList>
    </citation>
    <scope>NUCLEOTIDE SEQUENCE [LARGE SCALE GENOMIC DNA]</scope>
    <source>
        <strain>168</strain>
    </source>
</reference>
<reference key="3">
    <citation type="journal article" date="2009" name="Microbiology">
        <title>From a consortium sequence to a unified sequence: the Bacillus subtilis 168 reference genome a decade later.</title>
        <authorList>
            <person name="Barbe V."/>
            <person name="Cruveiller S."/>
            <person name="Kunst F."/>
            <person name="Lenoble P."/>
            <person name="Meurice G."/>
            <person name="Sekowska A."/>
            <person name="Vallenet D."/>
            <person name="Wang T."/>
            <person name="Moszer I."/>
            <person name="Medigue C."/>
            <person name="Danchin A."/>
        </authorList>
    </citation>
    <scope>SEQUENCE REVISION TO 19</scope>
</reference>
<reference key="4">
    <citation type="journal article" date="2005" name="Microbiol. Mol. Biol. Rev.">
        <title>The TetR family of transcriptional repressors.</title>
        <authorList>
            <person name="Ramos J.L."/>
            <person name="Martinez-Bueno M."/>
            <person name="Molina-Henares A.J."/>
            <person name="Teran W."/>
            <person name="Watanabe K."/>
            <person name="Zhang X."/>
            <person name="Gallegos M.T."/>
            <person name="Brennan R."/>
            <person name="Tobes R."/>
        </authorList>
    </citation>
    <scope>REVIEW</scope>
    <scope>GENE FAMILY</scope>
</reference>
<evidence type="ECO:0000255" key="1">
    <source>
        <dbReference type="PROSITE-ProRule" id="PRU00335"/>
    </source>
</evidence>
<evidence type="ECO:0000305" key="2"/>
<evidence type="ECO:0007829" key="3">
    <source>
        <dbReference type="PDB" id="1SGM"/>
    </source>
</evidence>
<feature type="chain" id="PRO_0000070655" description="Uncharacterized HTH-type transcriptional regulator YxaF">
    <location>
        <begin position="1"/>
        <end position="191"/>
    </location>
</feature>
<feature type="domain" description="HTH tetR-type" evidence="1">
    <location>
        <begin position="5"/>
        <end position="65"/>
    </location>
</feature>
<feature type="DNA-binding region" description="H-T-H motif" evidence="1">
    <location>
        <begin position="28"/>
        <end position="47"/>
    </location>
</feature>
<feature type="sequence conflict" description="In Ref. 1; BAA21585." evidence="2" ref="1">
    <original>F</original>
    <variation>S</variation>
    <location>
        <position position="19"/>
    </location>
</feature>
<feature type="helix" evidence="3">
    <location>
        <begin position="7"/>
        <end position="22"/>
    </location>
</feature>
<feature type="turn" evidence="3">
    <location>
        <begin position="24"/>
        <end position="26"/>
    </location>
</feature>
<feature type="helix" evidence="3">
    <location>
        <begin position="29"/>
        <end position="36"/>
    </location>
</feature>
<feature type="helix" evidence="3">
    <location>
        <begin position="42"/>
        <end position="45"/>
    </location>
</feature>
<feature type="turn" evidence="3">
    <location>
        <begin position="47"/>
        <end position="49"/>
    </location>
</feature>
<feature type="helix" evidence="3">
    <location>
        <begin position="51"/>
        <end position="75"/>
    </location>
</feature>
<feature type="helix" evidence="3">
    <location>
        <begin position="80"/>
        <end position="93"/>
    </location>
</feature>
<feature type="helix" evidence="3">
    <location>
        <begin position="98"/>
        <end position="100"/>
    </location>
</feature>
<feature type="helix" evidence="3">
    <location>
        <begin position="107"/>
        <end position="113"/>
    </location>
</feature>
<feature type="helix" evidence="3">
    <location>
        <begin position="118"/>
        <end position="141"/>
    </location>
</feature>
<feature type="helix" evidence="3">
    <location>
        <begin position="146"/>
        <end position="170"/>
    </location>
</feature>
<feature type="helix" evidence="3">
    <location>
        <begin position="174"/>
        <end position="180"/>
    </location>
</feature>
<feature type="helix" evidence="3">
    <location>
        <begin position="183"/>
        <end position="186"/>
    </location>
</feature>
<dbReference type="EMBL" id="AB005554">
    <property type="protein sequence ID" value="BAA21585.1"/>
    <property type="molecule type" value="Genomic_DNA"/>
</dbReference>
<dbReference type="EMBL" id="AL009126">
    <property type="protein sequence ID" value="CAB16036.2"/>
    <property type="molecule type" value="Genomic_DNA"/>
</dbReference>
<dbReference type="PIR" id="E70071">
    <property type="entry name" value="E70071"/>
</dbReference>
<dbReference type="RefSeq" id="WP_003227022.1">
    <property type="nucleotide sequence ID" value="NZ_OZ025638.1"/>
</dbReference>
<dbReference type="PDB" id="1SGM">
    <property type="method" value="X-ray"/>
    <property type="resolution" value="2.00 A"/>
    <property type="chains" value="A/B=1-191"/>
</dbReference>
<dbReference type="PDBsum" id="1SGM"/>
<dbReference type="SMR" id="P42105"/>
<dbReference type="FunCoup" id="P42105">
    <property type="interactions" value="489"/>
</dbReference>
<dbReference type="STRING" id="224308.BSU39990"/>
<dbReference type="PaxDb" id="224308-BSU39990"/>
<dbReference type="EnsemblBacteria" id="CAB16036">
    <property type="protein sequence ID" value="CAB16036"/>
    <property type="gene ID" value="BSU_39990"/>
</dbReference>
<dbReference type="GeneID" id="937690"/>
<dbReference type="KEGG" id="bsu:BSU39990"/>
<dbReference type="PATRIC" id="fig|224308.179.peg.4325"/>
<dbReference type="eggNOG" id="COG1309">
    <property type="taxonomic scope" value="Bacteria"/>
</dbReference>
<dbReference type="InParanoid" id="P42105"/>
<dbReference type="OrthoDB" id="9810023at2"/>
<dbReference type="PhylomeDB" id="P42105"/>
<dbReference type="BioCyc" id="BSUB:BSU39990-MONOMER"/>
<dbReference type="EvolutionaryTrace" id="P42105"/>
<dbReference type="Proteomes" id="UP000001570">
    <property type="component" value="Chromosome"/>
</dbReference>
<dbReference type="GO" id="GO:0003677">
    <property type="term" value="F:DNA binding"/>
    <property type="evidence" value="ECO:0007669"/>
    <property type="project" value="UniProtKB-KW"/>
</dbReference>
<dbReference type="Gene3D" id="1.10.357.10">
    <property type="entry name" value="Tetracycline Repressor, domain 2"/>
    <property type="match status" value="1"/>
</dbReference>
<dbReference type="InterPro" id="IPR009057">
    <property type="entry name" value="Homeodomain-like_sf"/>
</dbReference>
<dbReference type="InterPro" id="IPR001647">
    <property type="entry name" value="HTH_TetR"/>
</dbReference>
<dbReference type="InterPro" id="IPR036271">
    <property type="entry name" value="Tet_transcr_reg_TetR-rel_C_sf"/>
</dbReference>
<dbReference type="InterPro" id="IPR054156">
    <property type="entry name" value="YxaF_TetR_C"/>
</dbReference>
<dbReference type="PANTHER" id="PTHR47506:SF3">
    <property type="entry name" value="HTH-TYPE TRANSCRIPTIONAL REGULATOR LMRA"/>
    <property type="match status" value="1"/>
</dbReference>
<dbReference type="PANTHER" id="PTHR47506">
    <property type="entry name" value="TRANSCRIPTIONAL REGULATORY PROTEIN"/>
    <property type="match status" value="1"/>
</dbReference>
<dbReference type="Pfam" id="PF21993">
    <property type="entry name" value="TetR_C_13_2"/>
    <property type="match status" value="1"/>
</dbReference>
<dbReference type="Pfam" id="PF00440">
    <property type="entry name" value="TetR_N"/>
    <property type="match status" value="1"/>
</dbReference>
<dbReference type="PRINTS" id="PR00455">
    <property type="entry name" value="HTHTETR"/>
</dbReference>
<dbReference type="SUPFAM" id="SSF46689">
    <property type="entry name" value="Homeodomain-like"/>
    <property type="match status" value="1"/>
</dbReference>
<dbReference type="SUPFAM" id="SSF48498">
    <property type="entry name" value="Tetracyclin repressor-like, C-terminal domain"/>
    <property type="match status" value="1"/>
</dbReference>
<dbReference type="PROSITE" id="PS50977">
    <property type="entry name" value="HTH_TETR_2"/>
    <property type="match status" value="1"/>
</dbReference>
<accession>P42105</accession>
<sequence length="191" mass="21079">MTSRGDSREKILHTASRLFQLQGYHATGLNQIVKESGAPKGSLYHFFPNGKEELAIEAVTYTGKIVEHLIQQSMDESSDPVEAIQLFIKKTASQFDNTESIKGIPVGLLASETALISEPLRTVCMKVFKSWEAVFARKLMENGFAEEEANQLGTLINSMIEGGIMLSLTNKDKTPLLLIAEQIPVLVRKKG</sequence>
<proteinExistence type="evidence at protein level"/>